<organism>
    <name type="scientific">Mesocricetus auratus</name>
    <name type="common">Golden hamster</name>
    <dbReference type="NCBI Taxonomy" id="10036"/>
    <lineage>
        <taxon>Eukaryota</taxon>
        <taxon>Metazoa</taxon>
        <taxon>Chordata</taxon>
        <taxon>Craniata</taxon>
        <taxon>Vertebrata</taxon>
        <taxon>Euteleostomi</taxon>
        <taxon>Mammalia</taxon>
        <taxon>Eutheria</taxon>
        <taxon>Euarchontoglires</taxon>
        <taxon>Glires</taxon>
        <taxon>Rodentia</taxon>
        <taxon>Myomorpha</taxon>
        <taxon>Muroidea</taxon>
        <taxon>Cricetidae</taxon>
        <taxon>Cricetinae</taxon>
        <taxon>Mesocricetus</taxon>
    </lineage>
</organism>
<accession>P07823</accession>
<name>BIP_MESAU</name>
<gene>
    <name evidence="4" type="primary">HSPA5</name>
    <name evidence="4" type="synonym">GRP78</name>
</gene>
<sequence length="654" mass="72379">MKFPMVAAALLLLCAVRAEEEDKKEDVGTVVGIDLGTTYSCVGVFKNGRVEIIANDQGNRITPSYVAFTPEGERLIGDAAKNQLTSNPENTVFDAKRLIGRTWNDPSVQQDIKFLPFKVVEKKTKPYIQVDIGGGQTKTFAPEEISAMVLTKMKETAEAYLGKKVTHAVVTVPAYFNDAQRQATKDAGTIAGLNVMRIINEPTAAAIAYGLDKREGEKNILVFDLGGGTFDVSLLTIDNGVFEVVATNGDTHLGGEDFDQRVMEHFIKLYKKKTGKDVRKDNRAVQKLRREVEKAKRALSSQHQARIEIESFFEGEDFSETLTRAKFEELNMDLFRSTMKPVQKVLEDSDLKKSDIDEIVLVGGSTRIPKIQQLVKEFFNGKEPSRGINPDEAVAYGAAVQAGVLSGDQDTGDLVLLDVCPLTLGIETVGGVMTKLIPRNTVVPTKKSQIFSTASDNQPTVTIKVYEGERPLTKDNHLLGTFDLTGIPPAPRGVPQIEVTFEIDVNGILRVTAEDKGTGNKNKITITNDQNRLTPEEIERMVNDAEKFAEEDKKLKERIDTRNELESYAYSLKNQIGDKEKLGGKLSSEDKETMEKAVEEKIEWLESHQDADIEDFKAKKKELEEIVQPIISKLYGSAGPPPTGEEDTSEKDEL</sequence>
<dbReference type="EC" id="3.6.4.10" evidence="4"/>
<dbReference type="EMBL" id="M17169">
    <property type="protein sequence ID" value="AAA51448.1"/>
    <property type="molecule type" value="mRNA"/>
</dbReference>
<dbReference type="SMR" id="P07823"/>
<dbReference type="DIP" id="DIP-29677N"/>
<dbReference type="IntAct" id="P07823">
    <property type="interactions" value="4"/>
</dbReference>
<dbReference type="STRING" id="10036.ENSMAUP00000018102"/>
<dbReference type="KEGG" id="cge:100689305"/>
<dbReference type="eggNOG" id="KOG0100">
    <property type="taxonomic scope" value="Eukaryota"/>
</dbReference>
<dbReference type="Proteomes" id="UP000189706">
    <property type="component" value="Unplaced"/>
</dbReference>
<dbReference type="GO" id="GO:0009986">
    <property type="term" value="C:cell surface"/>
    <property type="evidence" value="ECO:0007669"/>
    <property type="project" value="UniProtKB-SubCell"/>
</dbReference>
<dbReference type="GO" id="GO:0005737">
    <property type="term" value="C:cytoplasm"/>
    <property type="evidence" value="ECO:0000250"/>
    <property type="project" value="UniProtKB"/>
</dbReference>
<dbReference type="GO" id="GO:0005829">
    <property type="term" value="C:cytosol"/>
    <property type="evidence" value="ECO:0000250"/>
    <property type="project" value="UniProtKB"/>
</dbReference>
<dbReference type="GO" id="GO:0005788">
    <property type="term" value="C:endoplasmic reticulum lumen"/>
    <property type="evidence" value="ECO:0007669"/>
    <property type="project" value="UniProtKB-SubCell"/>
</dbReference>
<dbReference type="GO" id="GO:0043231">
    <property type="term" value="C:intracellular membrane-bounded organelle"/>
    <property type="evidence" value="ECO:0000314"/>
    <property type="project" value="UniProtKB"/>
</dbReference>
<dbReference type="GO" id="GO:0042470">
    <property type="term" value="C:melanosome"/>
    <property type="evidence" value="ECO:0007669"/>
    <property type="project" value="UniProtKB-SubCell"/>
</dbReference>
<dbReference type="GO" id="GO:0005739">
    <property type="term" value="C:mitochondrion"/>
    <property type="evidence" value="ECO:0000250"/>
    <property type="project" value="UniProtKB"/>
</dbReference>
<dbReference type="GO" id="GO:0005524">
    <property type="term" value="F:ATP binding"/>
    <property type="evidence" value="ECO:0007669"/>
    <property type="project" value="UniProtKB-KW"/>
</dbReference>
<dbReference type="GO" id="GO:0016887">
    <property type="term" value="F:ATP hydrolysis activity"/>
    <property type="evidence" value="ECO:0000314"/>
    <property type="project" value="UniProtKB"/>
</dbReference>
<dbReference type="GO" id="GO:0140662">
    <property type="term" value="F:ATP-dependent protein folding chaperone"/>
    <property type="evidence" value="ECO:0007669"/>
    <property type="project" value="InterPro"/>
</dbReference>
<dbReference type="GO" id="GO:0019904">
    <property type="term" value="F:protein domain specific binding"/>
    <property type="evidence" value="ECO:0000353"/>
    <property type="project" value="UniProtKB"/>
</dbReference>
<dbReference type="GO" id="GO:0035437">
    <property type="term" value="P:maintenance of protein localization in endoplasmic reticulum"/>
    <property type="evidence" value="ECO:0000250"/>
    <property type="project" value="UniProtKB"/>
</dbReference>
<dbReference type="GO" id="GO:1903895">
    <property type="term" value="P:negative regulation of IRE1-mediated unfolded protein response"/>
    <property type="evidence" value="ECO:0000250"/>
    <property type="project" value="UniProtKB"/>
</dbReference>
<dbReference type="GO" id="GO:0031333">
    <property type="term" value="P:negative regulation of protein-containing complex assembly"/>
    <property type="evidence" value="ECO:0000250"/>
    <property type="project" value="UniProtKB"/>
</dbReference>
<dbReference type="GO" id="GO:0030335">
    <property type="term" value="P:positive regulation of cell migration"/>
    <property type="evidence" value="ECO:0000250"/>
    <property type="project" value="UniProtKB"/>
</dbReference>
<dbReference type="GO" id="GO:0031204">
    <property type="term" value="P:post-translational protein targeting to membrane, translocation"/>
    <property type="evidence" value="ECO:0000250"/>
    <property type="project" value="UniProtKB"/>
</dbReference>
<dbReference type="CDD" id="cd10241">
    <property type="entry name" value="ASKHA_NBD_HSP70_BiP"/>
    <property type="match status" value="1"/>
</dbReference>
<dbReference type="FunFam" id="3.30.420.40:FF:000720">
    <property type="entry name" value="Endoplasmic reticulum chaperone BiP"/>
    <property type="match status" value="1"/>
</dbReference>
<dbReference type="FunFam" id="3.90.640.10:FF:000153">
    <property type="entry name" value="Endoplasmic reticulum chaperone BiP"/>
    <property type="match status" value="1"/>
</dbReference>
<dbReference type="FunFam" id="2.60.34.10:FF:000002">
    <property type="entry name" value="Heat shock 70 kDa"/>
    <property type="match status" value="1"/>
</dbReference>
<dbReference type="FunFam" id="3.30.30.30:FF:000001">
    <property type="entry name" value="heat shock 70 kDa protein-like"/>
    <property type="match status" value="1"/>
</dbReference>
<dbReference type="FunFam" id="1.20.1270.10:FF:000061">
    <property type="entry name" value="Heat shock protein family A (Hsp70) member 5"/>
    <property type="match status" value="1"/>
</dbReference>
<dbReference type="Gene3D" id="1.20.1270.10">
    <property type="match status" value="1"/>
</dbReference>
<dbReference type="Gene3D" id="3.30.420.40">
    <property type="match status" value="2"/>
</dbReference>
<dbReference type="Gene3D" id="3.90.640.10">
    <property type="entry name" value="Actin, Chain A, domain 4"/>
    <property type="match status" value="1"/>
</dbReference>
<dbReference type="Gene3D" id="2.60.34.10">
    <property type="entry name" value="Substrate Binding Domain Of DNAk, Chain A, domain 1"/>
    <property type="match status" value="1"/>
</dbReference>
<dbReference type="InterPro" id="IPR043129">
    <property type="entry name" value="ATPase_NBD"/>
</dbReference>
<dbReference type="InterPro" id="IPR042050">
    <property type="entry name" value="BIP_NBD"/>
</dbReference>
<dbReference type="InterPro" id="IPR018181">
    <property type="entry name" value="Heat_shock_70_CS"/>
</dbReference>
<dbReference type="InterPro" id="IPR029048">
    <property type="entry name" value="HSP70_C_sf"/>
</dbReference>
<dbReference type="InterPro" id="IPR029047">
    <property type="entry name" value="HSP70_peptide-bd_sf"/>
</dbReference>
<dbReference type="InterPro" id="IPR013126">
    <property type="entry name" value="Hsp_70_fam"/>
</dbReference>
<dbReference type="NCBIfam" id="NF001413">
    <property type="entry name" value="PRK00290.1"/>
    <property type="match status" value="1"/>
</dbReference>
<dbReference type="PANTHER" id="PTHR19375">
    <property type="entry name" value="HEAT SHOCK PROTEIN 70KDA"/>
    <property type="match status" value="1"/>
</dbReference>
<dbReference type="Pfam" id="PF00012">
    <property type="entry name" value="HSP70"/>
    <property type="match status" value="1"/>
</dbReference>
<dbReference type="PRINTS" id="PR00301">
    <property type="entry name" value="HEATSHOCK70"/>
</dbReference>
<dbReference type="SUPFAM" id="SSF53067">
    <property type="entry name" value="Actin-like ATPase domain"/>
    <property type="match status" value="2"/>
</dbReference>
<dbReference type="SUPFAM" id="SSF100934">
    <property type="entry name" value="Heat shock protein 70kD (HSP70), C-terminal subdomain"/>
    <property type="match status" value="1"/>
</dbReference>
<dbReference type="SUPFAM" id="SSF100920">
    <property type="entry name" value="Heat shock protein 70kD (HSP70), peptide-binding domain"/>
    <property type="match status" value="1"/>
</dbReference>
<dbReference type="PROSITE" id="PS00014">
    <property type="entry name" value="ER_TARGET"/>
    <property type="match status" value="1"/>
</dbReference>
<dbReference type="PROSITE" id="PS00297">
    <property type="entry name" value="HSP70_1"/>
    <property type="match status" value="1"/>
</dbReference>
<dbReference type="PROSITE" id="PS00329">
    <property type="entry name" value="HSP70_2"/>
    <property type="match status" value="1"/>
</dbReference>
<dbReference type="PROSITE" id="PS01036">
    <property type="entry name" value="HSP70_3"/>
    <property type="match status" value="1"/>
</dbReference>
<comment type="function">
    <text evidence="1 4 5">Endoplasmic reticulum chaperone that plays a key role in protein folding and quality control in the endoplasmic reticulum lumen (By similarity). Involved in the correct folding of proteins and degradation of misfolded proteins via its interaction with DNAJC10/ERdj5, probably to facilitate the release of DNAJC10/ERdj5 from its substrate (By similarity). Acts as a key repressor of the EIF2AK3/PERK and ERN1/IRE1-mediated unfolded protein response (UPR). In the unstressed endoplasmic reticulum, recruited by DNAJB9/ERdj4 to the luminal region of ERN1/IRE1, leading to disrupt the dimerization of ERN1/IRE1, thereby inactivating ERN1/IRE1. Also binds and inactivates EIF2AK3/PERK in unstressed cells. Accumulation of misfolded protein in the endoplasmic reticulum causes release of HSPA5/BiP from ERN1/IRE1 and EIF2AK3/PERK, allowing their homodimerization and subsequent activation (By similarity). Plays an auxiliary role in post-translational transport of small presecretory proteins across endoplasmic reticulum (ER). May function as an allosteric modulator for SEC61 channel-forming translocon complex, likely cooperating with SEC62 to enable the productive insertion of these precursors into SEC61 channel. Appears to specifically regulate translocation of precursors having inhibitory residues in their mature region that weaken channel gating. May also play a role in apoptosis and cell proliferation (By similarity).</text>
</comment>
<comment type="catalytic activity">
    <reaction evidence="1">
        <text>ATP + H2O = ADP + phosphate + H(+)</text>
        <dbReference type="Rhea" id="RHEA:13065"/>
        <dbReference type="ChEBI" id="CHEBI:15377"/>
        <dbReference type="ChEBI" id="CHEBI:15378"/>
        <dbReference type="ChEBI" id="CHEBI:30616"/>
        <dbReference type="ChEBI" id="CHEBI:43474"/>
        <dbReference type="ChEBI" id="CHEBI:456216"/>
        <dbReference type="EC" id="3.6.4.10"/>
    </reaction>
</comment>
<comment type="activity regulation">
    <text evidence="1 4">The chaperone activity is regulated by ATP-induced allosteric coupling of the nucleotide-binding (NBD) and substrate-binding (SBD) domains (By similarity). In the ADP-bound and nucleotide-free (apo) states, the two domains have little interaction (By similarity). In contrast, in the ATP-bound state the two domains are tightly coupled, which results in drastically accelerated kinetics in both binding and release of polypeptide substrates (By similarity). J domain-containing co-chaperones (DNAJB9/ERdj4 or DNAJC10/ERdj5) stimulate the ATPase activity and are required for efficient substrate recognition by HSPA5/BiP. Homooligomerization inactivates participating HSPA5/BiP protomers and probably act as reservoirs to store HSPA5/BiP molecules when they are not needed by the cell (By similarity).</text>
</comment>
<comment type="subunit">
    <text evidence="1 4 5">Monomer and homooligomer; homooligomerization via the interdomain linker inactivates the chaperone activity and acts as a storage of HSPA5/BiP molecules (By similarity). Interacts with DNAJC1 (via J domain). Component of an EIF2 complex at least composed of CELF1/CUGBP1, CALR, CALR3, EIF2S1, EIF2S2, HSP90B1 and HSPA5. Part of a large chaperone multiprotein complex comprising DNAJB11, HSP90B1, HSPA5, HYOU, PDIA2, PDIA4, PDIA6, PPIB, SDF2L1, UGGT1 and very small amounts of ERP29, but not, or at very low levels, CALR nor CANX (By similarity). Interacts with TMEM132A and TRIM21 (By similarity). May form a complex with ERLEC1, OS9, SEL1L and SYVN1 (By similarity). Interacts with DNAJC10. Interacts with DNAJB9/ERdj4; leading to recruit HSPA5/BiP to ERN1/IRE1 (By similarity). Interacts with ERN1/IRE1 (via luminal domain); the interaction takes place following interaction with DNAJB9/ERdj4 and leads to inactivate ERN1/IRE1, the interaction also competitively inhibits ERN1 interaction with MANF (By similarity). Interacts directly with MANF (via SAP domain); the interaction inhibits ATP binding to HSPA5/BiP and subsequent nucleotide exchange (By similarity). Interacts with EIF2AK3/PERK (via luminal domain); interaction leads to inactivate EIF2AK3/PERK (By similarity). Interacts with MX1 (By similarity). Interacts with METTL23 (By similarity). Interacts with CEMIP; the interaction induces calcium leakage from the endoplasmic reticulum and cell migration (By similarity). Interacts with PCSK4 form; the interaction takes place in the endoplasmic reticulum (By similarity). Interacts with CIPC (By similarity). Interacts with CCDC88B (via C-terminus); the interaction opposes ERN1-mediated JNK activation, protecting against apoptosis (By similarity). Interacts with INPP5K; necessary for INPP5K localization at the endoplasmic reticulum (By similarity). Interacts with MANF; the interaction is direct (By similarity). Interacts with LOXL2; leading to activate the ERN1/IRE1-XBP1 pathway of the unfolded protein response (By similarity). Interacts with CLU under stressed condition; interaction increases CLU protein stability; facilitates its retrotranslocation and redistribution to the mitochondria; cooperatively suppress stress-induced apoptosis by stabilizing mitochondrial membrane integrity (By similarity). Interacts with CCDC47 (By similarity). Interacts with CLN3 (By similarity). Interacts with ELAPOR1; may regulate the function of HSPA5 in apoptosis and cell proliferation. Interacts with CASP7 (By similarity). Interacts with ILDR2; the interaction stabilizes ILDR2 expression (By similarity). Interacts with ADAM7 (By similarity).</text>
</comment>
<comment type="interaction">
    <interactant intactId="EBI-371776">
        <id>P07823</id>
    </interactant>
    <interactant intactId="EBI-6904259">
        <id>PRO_0000037569</id>
        <dbReference type="UniProtKB" id="P27958"/>
    </interactant>
    <organismsDiffer>true</organismsDiffer>
    <experiments>3</experiments>
</comment>
<comment type="interaction">
    <interactant intactId="EBI-371776">
        <id>P07823</id>
    </interactant>
    <interactant intactId="EBI-6904269">
        <id>PRO_0000037570</id>
        <dbReference type="UniProtKB" id="P27958"/>
    </interactant>
    <organismsDiffer>true</organismsDiffer>
    <experiments>3</experiments>
</comment>
<comment type="subcellular location">
    <subcellularLocation>
        <location evidence="4">Endoplasmic reticulum lumen</location>
    </subcellularLocation>
    <subcellularLocation>
        <location evidence="4">Melanosome</location>
    </subcellularLocation>
    <subcellularLocation>
        <location evidence="5">Cytoplasm</location>
    </subcellularLocation>
    <subcellularLocation>
        <location>Cell surface</location>
    </subcellularLocation>
    <text evidence="4">Identified by mass spectrometry in melanosome fractions from stage I to stage IV (By similarity). Localizes to the cell surface in epithelial cells; high levels of free iron promotes cell surface localization (By similarity).</text>
</comment>
<comment type="tissue specificity">
    <text evidence="7">Detected in the acrosome and principal piece of the caput epididymal spermatazoa, not detected in the cauda epididymal spermatazoa (at protein level).</text>
</comment>
<comment type="domain">
    <text evidence="1">The interdomain linker regulates the chaperone activity by mediating the formation of homooligomers. Homooligomers are formed by engagement of the interdomain linker of one HSPA5/BiP molecule as a typical substrate of an adjacent HSPA5/BiP molecule. HSPA5/BiP oligomerization inactivates participating HSPA5/BiP protomers. HSPA5/BiP oligomers probably act as reservoirs to store HSPA5/BiP molecules when they are not needed by the cell. When the levels of unfolded proteins rise, cells can rapidly break up these oligomers to make active monomers.</text>
</comment>
<comment type="PTM">
    <text evidence="1">In unstressed cells, AMPylation at Thr-518 by FICD inactivates the chaperome activity: AMPylated form is locked in a relatively inert state and only weakly stimulated by J domain-containing proteins. In response to endoplasmic reticulum stress, de-AMPylation by the same protein, FICD, restores the chaperone activity.</text>
</comment>
<comment type="similarity">
    <text evidence="8">Belongs to the heat shock protein 70 family.</text>
</comment>
<feature type="signal peptide">
    <location>
        <begin position="1"/>
        <end position="18"/>
    </location>
</feature>
<feature type="chain" id="PRO_0000013567" description="Endoplasmic reticulum chaperone BiP">
    <location>
        <begin position="19"/>
        <end position="654"/>
    </location>
</feature>
<feature type="region of interest" description="Required for interaction with ELAPOR1" evidence="4">
    <location>
        <begin position="1"/>
        <end position="80"/>
    </location>
</feature>
<feature type="region of interest" description="Nucleotide-binding (NBD)" evidence="4">
    <location>
        <begin position="125"/>
        <end position="280"/>
    </location>
</feature>
<feature type="region of interest" description="Interdomain linker" evidence="1">
    <location>
        <begin position="409"/>
        <end position="419"/>
    </location>
</feature>
<feature type="region of interest" description="Substrate-binding (SBD)" evidence="4">
    <location>
        <begin position="420"/>
        <end position="500"/>
    </location>
</feature>
<feature type="region of interest" description="Disordered" evidence="6">
    <location>
        <begin position="632"/>
        <end position="654"/>
    </location>
</feature>
<feature type="short sequence motif" description="Prevents secretion from ER">
    <location>
        <begin position="651"/>
        <end position="654"/>
    </location>
</feature>
<feature type="compositionally biased region" description="Acidic residues" evidence="6">
    <location>
        <begin position="644"/>
        <end position="654"/>
    </location>
</feature>
<feature type="binding site" evidence="4">
    <location>
        <begin position="36"/>
        <end position="39"/>
    </location>
    <ligand>
        <name>ATP</name>
        <dbReference type="ChEBI" id="CHEBI:30616"/>
    </ligand>
</feature>
<feature type="binding site" evidence="4">
    <location>
        <position position="96"/>
    </location>
    <ligand>
        <name>ATP</name>
        <dbReference type="ChEBI" id="CHEBI:30616"/>
    </ligand>
</feature>
<feature type="binding site" evidence="4">
    <location>
        <begin position="227"/>
        <end position="229"/>
    </location>
    <ligand>
        <name>ATP</name>
        <dbReference type="ChEBI" id="CHEBI:30616"/>
    </ligand>
</feature>
<feature type="binding site" evidence="4">
    <location>
        <begin position="293"/>
        <end position="300"/>
    </location>
    <ligand>
        <name>ATP</name>
        <dbReference type="ChEBI" id="CHEBI:30616"/>
    </ligand>
</feature>
<feature type="binding site" evidence="4">
    <location>
        <begin position="364"/>
        <end position="367"/>
    </location>
    <ligand>
        <name>ATP</name>
        <dbReference type="ChEBI" id="CHEBI:30616"/>
    </ligand>
</feature>
<feature type="modified residue" description="Phosphoserine" evidence="2">
    <location>
        <position position="86"/>
    </location>
</feature>
<feature type="modified residue" description="N6-acetyllysine" evidence="5">
    <location>
        <position position="125"/>
    </location>
</feature>
<feature type="modified residue" description="3'-nitrotyrosine" evidence="5">
    <location>
        <position position="160"/>
    </location>
</feature>
<feature type="modified residue" description="N6-acetyllysine" evidence="5">
    <location>
        <position position="213"/>
    </location>
</feature>
<feature type="modified residue" description="N6-acetyllysine" evidence="3">
    <location>
        <position position="271"/>
    </location>
</feature>
<feature type="modified residue" description="N6-acetyllysine" evidence="5">
    <location>
        <position position="326"/>
    </location>
</feature>
<feature type="modified residue" description="N6-acetyllysine; alternate" evidence="5">
    <location>
        <position position="353"/>
    </location>
</feature>
<feature type="modified residue" description="N6-succinyllysine" evidence="5">
    <location>
        <position position="447"/>
    </location>
</feature>
<feature type="modified residue" description="Omega-N-methylarginine" evidence="3">
    <location>
        <position position="492"/>
    </location>
</feature>
<feature type="modified residue" description="O-AMP-threonine; alternate" evidence="1">
    <location>
        <position position="518"/>
    </location>
</feature>
<feature type="modified residue" description="Phosphothreonine; alternate" evidence="4">
    <location>
        <position position="518"/>
    </location>
</feature>
<feature type="modified residue" description="N6,N6,N6-trimethyllysine; by METTL21A; in vitro" evidence="3">
    <location>
        <position position="585"/>
    </location>
</feature>
<feature type="modified residue" description="N6,N6-dimethyllysine; alternate" evidence="4">
    <location>
        <position position="585"/>
    </location>
</feature>
<feature type="modified residue" description="N6-methyllysine; alternate" evidence="4">
    <location>
        <position position="585"/>
    </location>
</feature>
<feature type="modified residue" description="N6-methyllysine" evidence="4">
    <location>
        <position position="591"/>
    </location>
</feature>
<feature type="modified residue" description="Phosphothreonine" evidence="5">
    <location>
        <position position="643"/>
    </location>
</feature>
<feature type="modified residue" description="Phosphothreonine" evidence="5">
    <location>
        <position position="648"/>
    </location>
</feature>
<feature type="modified residue" description="Phosphoserine" evidence="5">
    <location>
        <position position="649"/>
    </location>
</feature>
<feature type="cross-link" description="Glycyl lysine isopeptide (Lys-Gly) (interchain with G-Cter in SUMO2)" evidence="4">
    <location>
        <position position="352"/>
    </location>
</feature>
<feature type="cross-link" description="Glycyl lysine isopeptide (Lys-Gly) (interchain with G-Cter in SUMO1); alternate" evidence="4">
    <location>
        <position position="353"/>
    </location>
</feature>
<reference key="1">
    <citation type="journal article" date="1987" name="Gene">
        <title>The nucleotide sequence encoding the hamster 78-kDa glucose-regulated protein (GRP78) and its conservation between hamster and rat.</title>
        <authorList>
            <person name="Ting J."/>
            <person name="Wooden S.K."/>
            <person name="Kriz R."/>
            <person name="Kelleher K."/>
            <person name="Kaufman R.J."/>
            <person name="Lee A.S."/>
        </authorList>
    </citation>
    <scope>NUCLEOTIDE SEQUENCE [MRNA]</scope>
</reference>
<reference key="2">
    <citation type="journal article" date="2010" name="Asian J. Androl.">
        <title>Glucose-regulated protein precursor (GRP78) and tumor rejection antigen (GP96) are unique to hamster caput epididymal spermatozoa.</title>
        <authorList>
            <person name="Kameshwari D.B."/>
            <person name="Bhande S."/>
            <person name="Sundaram C.S."/>
            <person name="Kota V."/>
            <person name="Siva A.B."/>
            <person name="Shivaji S."/>
        </authorList>
    </citation>
    <scope>IDENTIFICATION BY MASS SPECTROMETRY</scope>
    <scope>TISSUE SPECIFICITY</scope>
</reference>
<evidence type="ECO:0000250" key="1">
    <source>
        <dbReference type="UniProtKB" id="G3I8R9"/>
    </source>
</evidence>
<evidence type="ECO:0000250" key="2">
    <source>
        <dbReference type="UniProtKB" id="P06761"/>
    </source>
</evidence>
<evidence type="ECO:0000250" key="3">
    <source>
        <dbReference type="UniProtKB" id="P0DMV8"/>
    </source>
</evidence>
<evidence type="ECO:0000250" key="4">
    <source>
        <dbReference type="UniProtKB" id="P11021"/>
    </source>
</evidence>
<evidence type="ECO:0000250" key="5">
    <source>
        <dbReference type="UniProtKB" id="P20029"/>
    </source>
</evidence>
<evidence type="ECO:0000256" key="6">
    <source>
        <dbReference type="SAM" id="MobiDB-lite"/>
    </source>
</evidence>
<evidence type="ECO:0000269" key="7">
    <source>
    </source>
</evidence>
<evidence type="ECO:0000305" key="8"/>
<keyword id="KW-0007">Acetylation</keyword>
<keyword id="KW-0067">ATP-binding</keyword>
<keyword id="KW-0143">Chaperone</keyword>
<keyword id="KW-0963">Cytoplasm</keyword>
<keyword id="KW-0256">Endoplasmic reticulum</keyword>
<keyword id="KW-0378">Hydrolase</keyword>
<keyword id="KW-1017">Isopeptide bond</keyword>
<keyword id="KW-0488">Methylation</keyword>
<keyword id="KW-0944">Nitration</keyword>
<keyword id="KW-0547">Nucleotide-binding</keyword>
<keyword id="KW-0597">Phosphoprotein</keyword>
<keyword id="KW-1185">Reference proteome</keyword>
<keyword id="KW-0732">Signal</keyword>
<keyword id="KW-0832">Ubl conjugation</keyword>
<proteinExistence type="evidence at protein level"/>
<protein>
    <recommendedName>
        <fullName evidence="4">Endoplasmic reticulum chaperone BiP</fullName>
        <ecNumber evidence="4">3.6.4.10</ecNumber>
    </recommendedName>
    <alternativeName>
        <fullName evidence="4">78 kDa glucose-regulated protein</fullName>
        <shortName evidence="4">GRP-78</shortName>
    </alternativeName>
    <alternativeName>
        <fullName evidence="4">Binding-immunoglobulin protein</fullName>
        <shortName evidence="4">BiP</shortName>
    </alternativeName>
    <alternativeName>
        <fullName evidence="4">Heat shock protein 70 family protein 5</fullName>
        <shortName evidence="4">HSP70 family protein 5</shortName>
    </alternativeName>
    <alternativeName>
        <fullName evidence="4">Heat shock protein family A member 5</fullName>
    </alternativeName>
    <alternativeName>
        <fullName evidence="4">Immunoglobulin heavy chain-binding protein</fullName>
    </alternativeName>
</protein>